<feature type="chain" id="PRO_0000342730" description="D-fructose 1,6-bisphosphatase class 2/sedoheptulose 1,7-bisphosphatase">
    <location>
        <begin position="1"/>
        <end position="347"/>
    </location>
</feature>
<feature type="binding site" evidence="1">
    <location>
        <position position="33"/>
    </location>
    <ligand>
        <name>Mn(2+)</name>
        <dbReference type="ChEBI" id="CHEBI:29035"/>
        <label>1</label>
    </ligand>
</feature>
<feature type="binding site" evidence="1">
    <location>
        <position position="57"/>
    </location>
    <ligand>
        <name>Mn(2+)</name>
        <dbReference type="ChEBI" id="CHEBI:29035"/>
        <label>1</label>
    </ligand>
</feature>
<feature type="binding site" evidence="1">
    <location>
        <position position="97"/>
    </location>
    <ligand>
        <name>Mn(2+)</name>
        <dbReference type="ChEBI" id="CHEBI:29035"/>
        <label>2</label>
    </ligand>
</feature>
<feature type="binding site" evidence="1">
    <location>
        <begin position="100"/>
        <end position="102"/>
    </location>
    <ligand>
        <name>substrate</name>
    </ligand>
</feature>
<feature type="binding site" evidence="1">
    <location>
        <position position="100"/>
    </location>
    <ligand>
        <name>Mn(2+)</name>
        <dbReference type="ChEBI" id="CHEBI:29035"/>
        <label>2</label>
    </ligand>
</feature>
<feature type="binding site" evidence="1">
    <location>
        <position position="131"/>
    </location>
    <ligand>
        <name>substrate</name>
    </ligand>
</feature>
<feature type="binding site" evidence="1">
    <location>
        <begin position="176"/>
        <end position="178"/>
    </location>
    <ligand>
        <name>substrate</name>
    </ligand>
</feature>
<feature type="binding site" evidence="1">
    <location>
        <begin position="198"/>
        <end position="200"/>
    </location>
    <ligand>
        <name>substrate</name>
    </ligand>
</feature>
<feature type="binding site" evidence="1">
    <location>
        <position position="225"/>
    </location>
    <ligand>
        <name>Mn(2+)</name>
        <dbReference type="ChEBI" id="CHEBI:29035"/>
        <label>2</label>
    </ligand>
</feature>
<gene>
    <name type="ordered locus">CYB_2257</name>
</gene>
<sequence>MDNKLGLEIIEVVEQAAIAAARWMGKGDNKTADQVAVEAMREKLNQIPMRGRIVIGEGTRDEAPMLYIGEEVGICTRPDAEQFCRVEELVEIDIAVDPCEGTNLVAKGQNGSMAVLAISEKGGLLHAPDIYMQKLAAPPQAKGKVHIDYPPEKNLKIIAESLDREISDLTVVVMDRKRHLDLIRQIREAGARVKLITDGDISAALSAGFNGTGIHALMGIGAAPEGVISAAALRCLGAHFQGRLIYDPEVVQAGTYLPPVEETRRELKEKGIEDPDKVWECEELASGKEVLFAATGITDGDLMRGVRFFGGGARTETLVISSQSRTVRFVDTIHMKDGQQPRGLQLR</sequence>
<organism>
    <name type="scientific">Synechococcus sp. (strain JA-2-3B'a(2-13))</name>
    <name type="common">Cyanobacteria bacterium Yellowstone B-Prime</name>
    <dbReference type="NCBI Taxonomy" id="321332"/>
    <lineage>
        <taxon>Bacteria</taxon>
        <taxon>Bacillati</taxon>
        <taxon>Cyanobacteriota</taxon>
        <taxon>Cyanophyceae</taxon>
        <taxon>Synechococcales</taxon>
        <taxon>Synechococcaceae</taxon>
        <taxon>Synechococcus</taxon>
    </lineage>
</organism>
<reference key="1">
    <citation type="journal article" date="2007" name="ISME J.">
        <title>Population level functional diversity in a microbial community revealed by comparative genomic and metagenomic analyses.</title>
        <authorList>
            <person name="Bhaya D."/>
            <person name="Grossman A.R."/>
            <person name="Steunou A.-S."/>
            <person name="Khuri N."/>
            <person name="Cohan F.M."/>
            <person name="Hamamura N."/>
            <person name="Melendrez M.C."/>
            <person name="Bateson M.M."/>
            <person name="Ward D.M."/>
            <person name="Heidelberg J.F."/>
        </authorList>
    </citation>
    <scope>NUCLEOTIDE SEQUENCE [LARGE SCALE GENOMIC DNA]</scope>
    <source>
        <strain>JA-2-3B'a(2-13)</strain>
    </source>
</reference>
<keyword id="KW-0113">Calvin cycle</keyword>
<keyword id="KW-0119">Carbohydrate metabolism</keyword>
<keyword id="KW-0378">Hydrolase</keyword>
<keyword id="KW-0464">Manganese</keyword>
<keyword id="KW-0479">Metal-binding</keyword>
<keyword id="KW-1185">Reference proteome</keyword>
<evidence type="ECO:0000250" key="1"/>
<evidence type="ECO:0000305" key="2"/>
<comment type="function">
    <text evidence="1">Catalyzes the hydrolysis of fructose 1,6-bisphosphate (Fru 1,6-P2) and sedoheptulose 1,7-bisphosphate (Sed 1,7-P2) to fructose 6-phosphate and sedoheptulose 7-phosphate, respectively.</text>
</comment>
<comment type="catalytic activity">
    <reaction>
        <text>beta-D-fructose 1,6-bisphosphate + H2O = beta-D-fructose 6-phosphate + phosphate</text>
        <dbReference type="Rhea" id="RHEA:11064"/>
        <dbReference type="ChEBI" id="CHEBI:15377"/>
        <dbReference type="ChEBI" id="CHEBI:32966"/>
        <dbReference type="ChEBI" id="CHEBI:43474"/>
        <dbReference type="ChEBI" id="CHEBI:57634"/>
        <dbReference type="EC" id="3.1.3.11"/>
    </reaction>
</comment>
<comment type="catalytic activity">
    <reaction>
        <text>D-sedoheptulose 1,7-bisphosphate + H2O = D-sedoheptulose 7-phosphate + phosphate</text>
        <dbReference type="Rhea" id="RHEA:17461"/>
        <dbReference type="ChEBI" id="CHEBI:15377"/>
        <dbReference type="ChEBI" id="CHEBI:43474"/>
        <dbReference type="ChEBI" id="CHEBI:57483"/>
        <dbReference type="ChEBI" id="CHEBI:58335"/>
        <dbReference type="EC" id="3.1.3.37"/>
    </reaction>
</comment>
<comment type="cofactor">
    <cofactor evidence="1">
        <name>Mn(2+)</name>
        <dbReference type="ChEBI" id="CHEBI:29035"/>
    </cofactor>
</comment>
<comment type="pathway">
    <text>Carbohydrate biosynthesis; Calvin cycle.</text>
</comment>
<comment type="subunit">
    <text evidence="1">Homotetramer.</text>
</comment>
<comment type="similarity">
    <text evidence="2">Belongs to the FBPase class 2 family.</text>
</comment>
<dbReference type="EC" id="3.1.3.11"/>
<dbReference type="EC" id="3.1.3.37"/>
<dbReference type="EMBL" id="CP000240">
    <property type="protein sequence ID" value="ABD03198.1"/>
    <property type="molecule type" value="Genomic_DNA"/>
</dbReference>
<dbReference type="SMR" id="Q2JJG9"/>
<dbReference type="STRING" id="321332.CYB_2257"/>
<dbReference type="KEGG" id="cyb:CYB_2257"/>
<dbReference type="eggNOG" id="COG1494">
    <property type="taxonomic scope" value="Bacteria"/>
</dbReference>
<dbReference type="HOGENOM" id="CLU_054938_0_0_3"/>
<dbReference type="OrthoDB" id="9779353at2"/>
<dbReference type="UniPathway" id="UPA00116"/>
<dbReference type="Proteomes" id="UP000001938">
    <property type="component" value="Chromosome"/>
</dbReference>
<dbReference type="GO" id="GO:0005829">
    <property type="term" value="C:cytosol"/>
    <property type="evidence" value="ECO:0007669"/>
    <property type="project" value="TreeGrafter"/>
</dbReference>
<dbReference type="GO" id="GO:0042132">
    <property type="term" value="F:fructose 1,6-bisphosphate 1-phosphatase activity"/>
    <property type="evidence" value="ECO:0007669"/>
    <property type="project" value="UniProtKB-EC"/>
</dbReference>
<dbReference type="GO" id="GO:0046872">
    <property type="term" value="F:metal ion binding"/>
    <property type="evidence" value="ECO:0007669"/>
    <property type="project" value="UniProtKB-KW"/>
</dbReference>
<dbReference type="GO" id="GO:0050278">
    <property type="term" value="F:sedoheptulose-bisphosphatase activity"/>
    <property type="evidence" value="ECO:0007669"/>
    <property type="project" value="UniProtKB-EC"/>
</dbReference>
<dbReference type="GO" id="GO:0030388">
    <property type="term" value="P:fructose 1,6-bisphosphate metabolic process"/>
    <property type="evidence" value="ECO:0007669"/>
    <property type="project" value="TreeGrafter"/>
</dbReference>
<dbReference type="GO" id="GO:0006094">
    <property type="term" value="P:gluconeogenesis"/>
    <property type="evidence" value="ECO:0007669"/>
    <property type="project" value="InterPro"/>
</dbReference>
<dbReference type="GO" id="GO:0006071">
    <property type="term" value="P:glycerol metabolic process"/>
    <property type="evidence" value="ECO:0007669"/>
    <property type="project" value="InterPro"/>
</dbReference>
<dbReference type="GO" id="GO:0019253">
    <property type="term" value="P:reductive pentose-phosphate cycle"/>
    <property type="evidence" value="ECO:0007669"/>
    <property type="project" value="UniProtKB-UniPathway"/>
</dbReference>
<dbReference type="CDD" id="cd01516">
    <property type="entry name" value="FBPase_glpX"/>
    <property type="match status" value="1"/>
</dbReference>
<dbReference type="FunFam" id="3.40.190.90:FF:000001">
    <property type="entry name" value="Fructose-1,6-bisphosphatase"/>
    <property type="match status" value="1"/>
</dbReference>
<dbReference type="Gene3D" id="3.40.190.90">
    <property type="match status" value="1"/>
</dbReference>
<dbReference type="Gene3D" id="3.30.540.10">
    <property type="entry name" value="Fructose-1,6-Bisphosphatase, subunit A, domain 1"/>
    <property type="match status" value="1"/>
</dbReference>
<dbReference type="InterPro" id="IPR004464">
    <property type="entry name" value="FBPase_class-2/SBPase"/>
</dbReference>
<dbReference type="NCBIfam" id="TIGR00330">
    <property type="entry name" value="glpX"/>
    <property type="match status" value="1"/>
</dbReference>
<dbReference type="PANTHER" id="PTHR30447:SF0">
    <property type="entry name" value="FRUCTOSE-1,6-BISPHOSPHATASE 1 CLASS 2-RELATED"/>
    <property type="match status" value="1"/>
</dbReference>
<dbReference type="PANTHER" id="PTHR30447">
    <property type="entry name" value="FRUCTOSE-1,6-BISPHOSPHATASE CLASS 2"/>
    <property type="match status" value="1"/>
</dbReference>
<dbReference type="Pfam" id="PF03320">
    <property type="entry name" value="FBPase_glpX"/>
    <property type="match status" value="1"/>
</dbReference>
<dbReference type="PIRSF" id="PIRSF004532">
    <property type="entry name" value="GlpX"/>
    <property type="match status" value="1"/>
</dbReference>
<dbReference type="SUPFAM" id="SSF56655">
    <property type="entry name" value="Carbohydrate phosphatase"/>
    <property type="match status" value="1"/>
</dbReference>
<protein>
    <recommendedName>
        <fullName>D-fructose 1,6-bisphosphatase class 2/sedoheptulose 1,7-bisphosphatase</fullName>
        <shortName>FBPase class 2/SBPase</shortName>
        <ecNumber>3.1.3.11</ecNumber>
        <ecNumber>3.1.3.37</ecNumber>
    </recommendedName>
</protein>
<proteinExistence type="inferred from homology"/>
<accession>Q2JJG9</accession>
<name>FBSB_SYNJB</name>